<keyword id="KW-0256">Endoplasmic reticulum</keyword>
<keyword id="KW-0413">Isomerase</keyword>
<keyword id="KW-0444">Lipid biosynthesis</keyword>
<keyword id="KW-0443">Lipid metabolism</keyword>
<keyword id="KW-0472">Membrane</keyword>
<keyword id="KW-1185">Reference proteome</keyword>
<keyword id="KW-0752">Steroid biosynthesis</keyword>
<keyword id="KW-0753">Steroid metabolism</keyword>
<keyword id="KW-0756">Sterol biosynthesis</keyword>
<keyword id="KW-1207">Sterol metabolism</keyword>
<keyword id="KW-0812">Transmembrane</keyword>
<keyword id="KW-1133">Transmembrane helix</keyword>
<gene>
    <name type="primary">ERG2</name>
    <name type="ORF">MGG_08624</name>
</gene>
<feature type="chain" id="PRO_0000087017" description="C-8 sterol isomerase">
    <location>
        <begin position="1"/>
        <end position="221"/>
    </location>
</feature>
<feature type="transmembrane region" description="Helical" evidence="2">
    <location>
        <begin position="5"/>
        <end position="25"/>
    </location>
</feature>
<sequence>MSSPISGFLRFVAVLLAVVSPLVYLAEQRLESFYVFDHKHLHELSTQAIAQHGNNTRAIVGHIVDELRARPETTKYISVQEEWVFNNAGGAMGGMYIIHASVTEYLIIFGTAIGTEGHTGRHTADDYFNILTGEQWAYVPGEYEPEVYPAGSVHHLRRGTVKQYKMPEGCFALEYARGWIPPMLFFGFADGLSSTLDFPTLWQTTVVTGREMLGNLMLGKF</sequence>
<name>ERG2_PYRO7</name>
<organism>
    <name type="scientific">Pyricularia oryzae (strain 70-15 / ATCC MYA-4617 / FGSC 8958)</name>
    <name type="common">Rice blast fungus</name>
    <name type="synonym">Magnaporthe oryzae</name>
    <dbReference type="NCBI Taxonomy" id="242507"/>
    <lineage>
        <taxon>Eukaryota</taxon>
        <taxon>Fungi</taxon>
        <taxon>Dikarya</taxon>
        <taxon>Ascomycota</taxon>
        <taxon>Pezizomycotina</taxon>
        <taxon>Sordariomycetes</taxon>
        <taxon>Sordariomycetidae</taxon>
        <taxon>Magnaporthales</taxon>
        <taxon>Pyriculariaceae</taxon>
        <taxon>Pyricularia</taxon>
    </lineage>
</organism>
<comment type="function">
    <text>Catalyzes the reaction which results in unsaturation at C-7 in the B ring of sterols.</text>
</comment>
<comment type="pathway">
    <text>Steroid metabolism; ergosterol biosynthesis; ergosterol from zymosterol: step 2/5.</text>
</comment>
<comment type="subcellular location">
    <subcellularLocation>
        <location evidence="1">Endoplasmic reticulum membrane</location>
        <topology evidence="1">Single-pass membrane protein</topology>
    </subcellularLocation>
</comment>
<comment type="similarity">
    <text evidence="3">Belongs to the ERG2 family.</text>
</comment>
<accession>P33281</accession>
<accession>A4QSA4</accession>
<accession>G4ML13</accession>
<dbReference type="EC" id="5.-.-.-"/>
<dbReference type="EMBL" id="Z22775">
    <property type="protein sequence ID" value="CAA80454.1"/>
    <property type="molecule type" value="Genomic_DNA"/>
</dbReference>
<dbReference type="EMBL" id="CM001231">
    <property type="protein sequence ID" value="EHA58440.1"/>
    <property type="molecule type" value="Genomic_DNA"/>
</dbReference>
<dbReference type="PIR" id="S44061">
    <property type="entry name" value="S33457"/>
</dbReference>
<dbReference type="RefSeq" id="XP_003711052.1">
    <property type="nucleotide sequence ID" value="XM_003711004.1"/>
</dbReference>
<dbReference type="SMR" id="P33281"/>
<dbReference type="FunCoup" id="P33281">
    <property type="interactions" value="147"/>
</dbReference>
<dbReference type="STRING" id="242507.P33281"/>
<dbReference type="EnsemblFungi" id="MGG_08624T0">
    <property type="protein sequence ID" value="MGG_08624T0"/>
    <property type="gene ID" value="MGG_08624"/>
</dbReference>
<dbReference type="GeneID" id="2679059"/>
<dbReference type="KEGG" id="mgr:MGG_08624"/>
<dbReference type="VEuPathDB" id="FungiDB:MGG_08624"/>
<dbReference type="eggNOG" id="KOG4143">
    <property type="taxonomic scope" value="Eukaryota"/>
</dbReference>
<dbReference type="HOGENOM" id="CLU_085469_0_0_1"/>
<dbReference type="InParanoid" id="P33281"/>
<dbReference type="OMA" id="AMYVIHA"/>
<dbReference type="OrthoDB" id="347124at2759"/>
<dbReference type="UniPathway" id="UPA00768">
    <property type="reaction ID" value="UER00761"/>
</dbReference>
<dbReference type="Proteomes" id="UP000009058">
    <property type="component" value="Chromosome 1"/>
</dbReference>
<dbReference type="GO" id="GO:0005789">
    <property type="term" value="C:endoplasmic reticulum membrane"/>
    <property type="evidence" value="ECO:0007669"/>
    <property type="project" value="UniProtKB-SubCell"/>
</dbReference>
<dbReference type="GO" id="GO:0016853">
    <property type="term" value="F:isomerase activity"/>
    <property type="evidence" value="ECO:0007669"/>
    <property type="project" value="UniProtKB-KW"/>
</dbReference>
<dbReference type="GO" id="GO:0006696">
    <property type="term" value="P:ergosterol biosynthetic process"/>
    <property type="evidence" value="ECO:0007669"/>
    <property type="project" value="TreeGrafter"/>
</dbReference>
<dbReference type="InterPro" id="IPR006716">
    <property type="entry name" value="ERG2_sigma1_rcpt-like"/>
</dbReference>
<dbReference type="PANTHER" id="PTHR10868">
    <property type="entry name" value="SIGMA 1-TYPE OPIOID RECEPTOR-RELATED"/>
    <property type="match status" value="1"/>
</dbReference>
<dbReference type="PANTHER" id="PTHR10868:SF1">
    <property type="entry name" value="SIGMA NON-OPIOID INTRACELLULAR RECEPTOR 1"/>
    <property type="match status" value="1"/>
</dbReference>
<dbReference type="Pfam" id="PF04622">
    <property type="entry name" value="ERG2_Sigma1R"/>
    <property type="match status" value="1"/>
</dbReference>
<protein>
    <recommendedName>
        <fullName>C-8 sterol isomerase</fullName>
        <ecNumber>5.-.-.-</ecNumber>
    </recommendedName>
    <alternativeName>
        <fullName>Delta-8--delta-7 sterol isomerase</fullName>
    </alternativeName>
</protein>
<proteinExistence type="inferred from homology"/>
<evidence type="ECO:0000250" key="1"/>
<evidence type="ECO:0000255" key="2"/>
<evidence type="ECO:0000305" key="3"/>
<reference key="1">
    <citation type="journal article" date="1994" name="Curr. Genet.">
        <title>Isolation of the ERG2 gene, encoding sterol delta 8--&gt;delta 7 isomerase, from the rice blast fungus Magnaporthe grisea and its expression in the maize smut pathogen Ustilago maydis.</title>
        <authorList>
            <person name="Keon J.P.R."/>
            <person name="James C.S."/>
            <person name="Court S."/>
            <person name="Baden-Daintree C."/>
            <person name="Bailey A.M."/>
            <person name="Burden M."/>
            <person name="Hargreaves J.A."/>
        </authorList>
    </citation>
    <scope>NUCLEOTIDE SEQUENCE [GENOMIC DNA]</scope>
</reference>
<reference key="2">
    <citation type="journal article" date="2005" name="Nature">
        <title>The genome sequence of the rice blast fungus Magnaporthe grisea.</title>
        <authorList>
            <person name="Dean R.A."/>
            <person name="Talbot N.J."/>
            <person name="Ebbole D.J."/>
            <person name="Farman M.L."/>
            <person name="Mitchell T.K."/>
            <person name="Orbach M.J."/>
            <person name="Thon M.R."/>
            <person name="Kulkarni R."/>
            <person name="Xu J.-R."/>
            <person name="Pan H."/>
            <person name="Read N.D."/>
            <person name="Lee Y.-H."/>
            <person name="Carbone I."/>
            <person name="Brown D."/>
            <person name="Oh Y.Y."/>
            <person name="Donofrio N."/>
            <person name="Jeong J.S."/>
            <person name="Soanes D.M."/>
            <person name="Djonovic S."/>
            <person name="Kolomiets E."/>
            <person name="Rehmeyer C."/>
            <person name="Li W."/>
            <person name="Harding M."/>
            <person name="Kim S."/>
            <person name="Lebrun M.-H."/>
            <person name="Bohnert H."/>
            <person name="Coughlan S."/>
            <person name="Butler J."/>
            <person name="Calvo S.E."/>
            <person name="Ma L.-J."/>
            <person name="Nicol R."/>
            <person name="Purcell S."/>
            <person name="Nusbaum C."/>
            <person name="Galagan J.E."/>
            <person name="Birren B.W."/>
        </authorList>
    </citation>
    <scope>NUCLEOTIDE SEQUENCE [LARGE SCALE GENOMIC DNA]</scope>
    <source>
        <strain>70-15 / ATCC MYA-4617 / FGSC 8958</strain>
    </source>
</reference>